<name>BAIP3_HUMAN</name>
<sequence length="1187" mass="131901">MRPRGAAFAAGPPGDLHLGTAIGFAGAIWRSRSPAMSTLLDIKSSVLRQVQVCPSFRRRTEQDPGSASADPQEPATGAWKPGDGVEFFAHMRLMLKKGEGRQGLPCLEVPLRSGSPAPPEPVDPSLGLRALAPEEVEMLYEEALYTVLYRAGTMGPDQVDDEEALLSYLQQVFGTSLEEHTEAIERVRKAKAPTYALKVSVMRAKNLLAKDPNGFSDPYCMLGILPASDATREPRAQKEQRFGFRKGSKRGGPLPAKCIQVTEVKSSTLNPVWKEHFLFEIEDVSTDQLHLDIWDHDDDVSLVEACRKLNEVIGLKGMGRYFKQIVKSARANGTAGPTEDHTDDFLGCLNIPVREVPVAGVDRWFKLEPRSSASRVQGHCHLVLKLITTQRDTAMSQRGRSGFLSHLLLLSHLLRLEHSAEEPNSSSWRGELSTPAATILCLHGAQSNLSPLQLAVLHWQVSSRHHQTCTLDYSYLLGLLEDMQAHWEEAPSLPQEQEESLADSLSAFSEFGLQLLRQLRDYFPATNSTAVHRLELLLKCLGKLQLFQPSFEICPFESELNMDIAAALKRGNREWYDRILNDKSPREQPGPQRLPGLVVLADAVYDDLQFCYSVYASLFHSILNVDVFTLTFRQLERLVAEEAWVLTEELSPKMTLEVASGLFELYLTLADLQRFWDSIPGRDSRSLALAGIHAPFLPAVKLWFQVLRDQAKWRLQGAVDMDTLEPVDASSRHSSSAATAGLCLSHIQELWVRLAWPDPAQAQGLGTQLGQDVCEATLFYTELLRKKVDTQPGAAGEAVSEALCVVLNNVELVRKAAGQALKGLAWPEGATGPEGVLPRPLLSCTQALDDDLQREAHTVTAHLTSKMVGDIRKYVQHISLSPDSIQNDEAVAPLMKYLDEKLALLNASLVKGNLSRVLEALWELLLQAILQALGANRDVSADFYSRFHFTLEALVSFFHAEGQGLPLESLRDGSYKRLKEELRLHKCSTRECIEQFYLDKLKQRTLEQNRFGRLSVRCHYEAAEQRLAVEVLHAADLLPLDANGLSDPFVIVELGPPHLFPLVRSQRTQVKTRTLHPVYDELFYFSVPAEACRRRAACVLFTVMDHDWLSTNDFAGEAALGLGGVTGVARPQVGGGARAGQPVTLHLCRPRAQVRSALRRLEGRTSKEAQEFVKKLKELEKCMEADP</sequence>
<organism>
    <name type="scientific">Homo sapiens</name>
    <name type="common">Human</name>
    <dbReference type="NCBI Taxonomy" id="9606"/>
    <lineage>
        <taxon>Eukaryota</taxon>
        <taxon>Metazoa</taxon>
        <taxon>Chordata</taxon>
        <taxon>Craniata</taxon>
        <taxon>Vertebrata</taxon>
        <taxon>Euteleostomi</taxon>
        <taxon>Mammalia</taxon>
        <taxon>Eutheria</taxon>
        <taxon>Euarchontoglires</taxon>
        <taxon>Primates</taxon>
        <taxon>Haplorrhini</taxon>
        <taxon>Catarrhini</taxon>
        <taxon>Hominidae</taxon>
        <taxon>Homo</taxon>
    </lineage>
</organism>
<evidence type="ECO:0000250" key="1">
    <source>
        <dbReference type="UniProtKB" id="Q80TT2"/>
    </source>
</evidence>
<evidence type="ECO:0000255" key="2">
    <source>
        <dbReference type="PROSITE-ProRule" id="PRU00041"/>
    </source>
</evidence>
<evidence type="ECO:0000255" key="3">
    <source>
        <dbReference type="PROSITE-ProRule" id="PRU00587"/>
    </source>
</evidence>
<evidence type="ECO:0000255" key="4">
    <source>
        <dbReference type="PROSITE-ProRule" id="PRU00588"/>
    </source>
</evidence>
<evidence type="ECO:0000256" key="5">
    <source>
        <dbReference type="SAM" id="MobiDB-lite"/>
    </source>
</evidence>
<evidence type="ECO:0000269" key="6">
    <source>
    </source>
</evidence>
<evidence type="ECO:0000269" key="7">
    <source>
    </source>
</evidence>
<evidence type="ECO:0000269" key="8">
    <source>
    </source>
</evidence>
<evidence type="ECO:0000269" key="9">
    <source>
    </source>
</evidence>
<evidence type="ECO:0000269" key="10">
    <source>
    </source>
</evidence>
<evidence type="ECO:0000269" key="11">
    <source>
    </source>
</evidence>
<evidence type="ECO:0000303" key="12">
    <source>
    </source>
</evidence>
<evidence type="ECO:0000303" key="13">
    <source>
    </source>
</evidence>
<evidence type="ECO:0000303" key="14">
    <source>
    </source>
</evidence>
<evidence type="ECO:0000303" key="15">
    <source>
    </source>
</evidence>
<evidence type="ECO:0000303" key="16">
    <source>
    </source>
</evidence>
<evidence type="ECO:0000305" key="17"/>
<evidence type="ECO:0000305" key="18">
    <source>
    </source>
</evidence>
<evidence type="ECO:0000312" key="19">
    <source>
        <dbReference type="HGNC" id="HGNC:948"/>
    </source>
</evidence>
<protein>
    <recommendedName>
        <fullName evidence="16">BAI1-associated protein 3</fullName>
        <shortName evidence="16">BAP3</shortName>
    </recommendedName>
    <alternativeName>
        <fullName evidence="16">Brain-specific angiogenesis inhibitor I-associated protein 3</fullName>
    </alternativeName>
</protein>
<keyword id="KW-0025">Alternative splicing</keyword>
<keyword id="KW-0106">Calcium</keyword>
<keyword id="KW-1003">Cell membrane</keyword>
<keyword id="KW-0963">Cytoplasm</keyword>
<keyword id="KW-0967">Endosome</keyword>
<keyword id="KW-0268">Exocytosis</keyword>
<keyword id="KW-0333">Golgi apparatus</keyword>
<keyword id="KW-0472">Membrane</keyword>
<keyword id="KW-0479">Metal-binding</keyword>
<keyword id="KW-1267">Proteomics identification</keyword>
<keyword id="KW-1185">Reference proteome</keyword>
<keyword id="KW-0677">Repeat</keyword>
<keyword id="KW-0813">Transport</keyword>
<gene>
    <name evidence="15 19" type="primary">BAIAP3</name>
    <name evidence="12" type="synonym">KIAA0734</name>
</gene>
<feature type="chain" id="PRO_0000064819" description="BAI1-associated protein 3">
    <location>
        <begin position="1"/>
        <end position="1187"/>
    </location>
</feature>
<feature type="domain" description="C2 1" evidence="2">
    <location>
        <begin position="176"/>
        <end position="335"/>
    </location>
</feature>
<feature type="domain" description="MHD1" evidence="3">
    <location>
        <begin position="663"/>
        <end position="784"/>
    </location>
</feature>
<feature type="domain" description="MHD2" evidence="4">
    <location>
        <begin position="888"/>
        <end position="996"/>
    </location>
</feature>
<feature type="domain" description="C2 2" evidence="2">
    <location>
        <begin position="1010"/>
        <end position="1136"/>
    </location>
</feature>
<feature type="region of interest" description="Disordered" evidence="5">
    <location>
        <begin position="55"/>
        <end position="81"/>
    </location>
</feature>
<feature type="binding site" evidence="2">
    <location>
        <position position="211"/>
    </location>
    <ligand>
        <name>Ca(2+)</name>
        <dbReference type="ChEBI" id="CHEBI:29108"/>
        <label>1</label>
    </ligand>
</feature>
<feature type="binding site" evidence="2">
    <location>
        <position position="217"/>
    </location>
    <ligand>
        <name>Ca(2+)</name>
        <dbReference type="ChEBI" id="CHEBI:29108"/>
        <label>1</label>
    </ligand>
</feature>
<feature type="binding site" evidence="2">
    <location>
        <position position="295"/>
    </location>
    <ligand>
        <name>Ca(2+)</name>
        <dbReference type="ChEBI" id="CHEBI:29108"/>
        <label>1</label>
    </ligand>
</feature>
<feature type="binding site" evidence="2">
    <location>
        <position position="297"/>
    </location>
    <ligand>
        <name>Ca(2+)</name>
        <dbReference type="ChEBI" id="CHEBI:29108"/>
        <label>1</label>
    </ligand>
</feature>
<feature type="binding site" evidence="2">
    <location>
        <position position="1040"/>
    </location>
    <ligand>
        <name>Ca(2+)</name>
        <dbReference type="ChEBI" id="CHEBI:29108"/>
        <label>3</label>
    </ligand>
</feature>
<feature type="binding site" evidence="2">
    <location>
        <position position="1041"/>
    </location>
    <ligand>
        <name>Ca(2+)</name>
        <dbReference type="ChEBI" id="CHEBI:29108"/>
        <label>2</label>
    </ligand>
</feature>
<feature type="binding site" evidence="2">
    <location>
        <position position="1041"/>
    </location>
    <ligand>
        <name>Ca(2+)</name>
        <dbReference type="ChEBI" id="CHEBI:29108"/>
        <label>3</label>
    </ligand>
</feature>
<feature type="binding site" evidence="2">
    <location>
        <position position="1047"/>
    </location>
    <ligand>
        <name>Ca(2+)</name>
        <dbReference type="ChEBI" id="CHEBI:29108"/>
        <label>2</label>
    </ligand>
</feature>
<feature type="binding site" evidence="2">
    <location>
        <position position="1105"/>
    </location>
    <ligand>
        <name>Ca(2+)</name>
        <dbReference type="ChEBI" id="CHEBI:29108"/>
        <label>2</label>
    </ligand>
</feature>
<feature type="binding site" evidence="2">
    <location>
        <position position="1105"/>
    </location>
    <ligand>
        <name>Ca(2+)</name>
        <dbReference type="ChEBI" id="CHEBI:29108"/>
        <label>3</label>
    </ligand>
</feature>
<feature type="binding site" evidence="2">
    <location>
        <position position="1107"/>
    </location>
    <ligand>
        <name>Ca(2+)</name>
        <dbReference type="ChEBI" id="CHEBI:29108"/>
        <label>2</label>
    </ligand>
</feature>
<feature type="binding site" evidence="2">
    <location>
        <position position="1107"/>
    </location>
    <ligand>
        <name>Ca(2+)</name>
        <dbReference type="ChEBI" id="CHEBI:29108"/>
        <label>3</label>
    </ligand>
</feature>
<feature type="binding site" evidence="2">
    <location>
        <position position="1107"/>
    </location>
    <ligand>
        <name>Ca(2+)</name>
        <dbReference type="ChEBI" id="CHEBI:29108"/>
        <label>4</label>
    </ligand>
</feature>
<feature type="binding site" evidence="2">
    <location>
        <position position="1110"/>
    </location>
    <ligand>
        <name>Ca(2+)</name>
        <dbReference type="ChEBI" id="CHEBI:29108"/>
        <label>4</label>
    </ligand>
</feature>
<feature type="binding site" evidence="2">
    <location>
        <position position="1113"/>
    </location>
    <ligand>
        <name>Ca(2+)</name>
        <dbReference type="ChEBI" id="CHEBI:29108"/>
        <label>3</label>
    </ligand>
</feature>
<feature type="binding site" evidence="2">
    <location>
        <position position="1113"/>
    </location>
    <ligand>
        <name>Ca(2+)</name>
        <dbReference type="ChEBI" id="CHEBI:29108"/>
        <label>4</label>
    </ligand>
</feature>
<feature type="splice variant" id="VSP_019231" description="In isoform 2, isoform 3, isoform 4, isoform 5 and isoform 6." evidence="13 14">
    <location>
        <begin position="1"/>
        <end position="35"/>
    </location>
</feature>
<feature type="splice variant" id="VSP_019232" description="In isoform 2." evidence="14">
    <original>E</original>
    <variation>EAWGSPCRQSPHPGPHTQ</variation>
    <location>
        <position position="108"/>
    </location>
</feature>
<feature type="splice variant" id="VSP_047000" description="In isoform 4." evidence="13">
    <location>
        <begin position="136"/>
        <end position="163"/>
    </location>
</feature>
<feature type="splice variant" id="VSP_044673" description="In isoform 3." evidence="13">
    <location>
        <begin position="136"/>
        <end position="158"/>
    </location>
</feature>
<feature type="splice variant" id="VSP_047001" description="In isoform 6." evidence="13">
    <location>
        <begin position="355"/>
        <end position="390"/>
    </location>
</feature>
<feature type="sequence variant" id="VAR_026667" description="In dbSNP:rs1132356." evidence="7 8 9 11">
    <original>D</original>
    <variation>A</variation>
    <location>
        <position position="582"/>
    </location>
</feature>
<feature type="sequence variant" id="VAR_050687" description="In dbSNP:rs36074509.">
    <original>S</original>
    <variation>I</variation>
    <location>
        <position position="879"/>
    </location>
</feature>
<feature type="sequence conflict" description="In Ref. 4; BAG61321." evidence="17" ref="4">
    <original>S</original>
    <variation>G</variation>
    <location>
        <position position="216"/>
    </location>
</feature>
<feature type="sequence conflict" description="In Ref. 4; BAG57886." evidence="17" ref="4">
    <original>S</original>
    <variation>G</variation>
    <location>
        <position position="248"/>
    </location>
</feature>
<feature type="sequence conflict" description="In Ref. 4; BAG61353." evidence="17" ref="4">
    <original>M</original>
    <variation>T</variation>
    <location>
        <position position="318"/>
    </location>
</feature>
<feature type="sequence conflict" description="In Ref. 4; BAG61353." evidence="17" ref="4">
    <original>E</original>
    <variation>G</variation>
    <location>
        <position position="422"/>
    </location>
</feature>
<feature type="sequence conflict" description="In Ref. 4; BAG61321." evidence="17" ref="4">
    <original>V</original>
    <variation>L</variation>
    <location>
        <position position="599"/>
    </location>
</feature>
<feature type="sequence conflict" description="In Ref. 5; CAH56376." evidence="17" ref="5">
    <original>P</original>
    <variation>T</variation>
    <location sequence="O94812-2">
        <position position="87"/>
    </location>
</feature>
<proteinExistence type="evidence at protein level"/>
<accession>O94812</accession>
<accession>A2A2B2</accession>
<accession>B2RCD7</accession>
<accession>B4DGS5</accession>
<accession>B4DIK3</accession>
<accession>B4DRK9</accession>
<accession>B4DRP1</accession>
<accession>E7EUB9</accession>
<accession>H3BUH8</accession>
<accession>H3BVI3</accession>
<accession>H7C2Q1</accession>
<accession>O94839</accession>
<accession>Q2M226</accession>
<accession>Q658J2</accession>
<accession>Q76N05</accession>
<accession>Q96RZ3</accession>
<accession>Q9UJK1</accession>
<comment type="function">
    <text evidence="1 10">Functions in endosome to Golgi retrograde transport. In response to calcium influx, may interact with SNARE fusion receptors and membrane phospholipids to mediate endosome fusion with the trans-Golgi network. By promoting the recycling of secretory vesicle transmembrane proteins, it indirectly controls dense-core secretory vesicle biogenesis, maturation and their ability to mediate the constitutive and regulated secretion of neurotransmitters and hormones. May regulate behavior and food intake by controlling calcium-stimulated exocytosis of neurotransmitters including NPY and serotonin and hormones like insulin (PubMed:28626000). Proposed to play a role in hypothalamic neuronal firing by modulating gamma-aminobutyric acid (GABA)ergic inhibitory neurotransmission (By similarity).</text>
</comment>
<comment type="cofactor">
    <cofactor evidence="2">
        <name>Ca(2+)</name>
        <dbReference type="ChEBI" id="CHEBI:29108"/>
    </cofactor>
    <text evidence="2">Binds 3 Ca(2+) ions per C2 domain.</text>
</comment>
<comment type="subunit">
    <text evidence="10 11">Interacts with ADGRB1; this interaction is direct (PubMed:9790924). Interacts with endosomal SNARE proteins VAMP3, VAMP4, STX6 and STX16; this interaction is increased in the presence of calcium (PubMed:28626000).</text>
</comment>
<comment type="subcellular location">
    <subcellularLocation>
        <location evidence="10">Cytoplasm</location>
        <location evidence="10">Cytosol</location>
    </subcellularLocation>
    <subcellularLocation>
        <location evidence="10">Recycling endosome membrane</location>
        <topology evidence="18">Peripheral membrane protein</topology>
    </subcellularLocation>
    <subcellularLocation>
        <location evidence="10">Late endosome membrane</location>
        <topology evidence="18">Peripheral membrane protein</topology>
    </subcellularLocation>
    <subcellularLocation>
        <location evidence="10">Golgi apparatus</location>
        <location evidence="10">trans-Golgi network membrane</location>
        <topology evidence="18">Peripheral membrane protein</topology>
    </subcellularLocation>
    <subcellularLocation>
        <location evidence="10">Cell membrane</location>
        <topology evidence="18">Peripheral membrane protein</topology>
    </subcellularLocation>
    <text evidence="10">Rapidly recruited to the plasma membrane and to Golgi structures in response to increased intracellular calcium concentration.</text>
</comment>
<comment type="alternative products">
    <event type="alternative splicing"/>
    <isoform>
        <id>O94812-1</id>
        <name>1</name>
        <sequence type="displayed"/>
    </isoform>
    <isoform>
        <id>O94812-2</id>
        <name>2</name>
        <sequence type="described" ref="VSP_019231 VSP_019232"/>
    </isoform>
    <isoform>
        <id>O94812-3</id>
        <name>3</name>
        <sequence type="described" ref="VSP_019231 VSP_044673"/>
    </isoform>
    <isoform>
        <id>O94812-5</id>
        <name>4</name>
        <sequence type="described" ref="VSP_019231 VSP_047000"/>
    </isoform>
    <isoform>
        <id>O94812-6</id>
        <name>5</name>
        <sequence type="described" ref="VSP_019231"/>
    </isoform>
    <isoform>
        <id>O94812-7</id>
        <name>6</name>
        <sequence type="described" ref="VSP_019231 VSP_047001"/>
    </isoform>
</comment>
<comment type="tissue specificity">
    <text evidence="6 11">Predominantly expressed in brain (PubMed:9790924). Also expressed in nonneural tissues such as breast and testes epithelium (PubMed:12498718).</text>
</comment>
<comment type="similarity">
    <text evidence="17">Belongs to the unc-13 family.</text>
</comment>
<comment type="sequence caution" evidence="17">
    <conflict type="erroneous initiation">
        <sequence resource="EMBL-CDS" id="BAA34454"/>
    </conflict>
    <text>Extended N-terminus.</text>
</comment>
<comment type="sequence caution" evidence="17">
    <conflict type="erroneous termination">
        <sequence resource="EMBL-CDS" id="BAG57886"/>
    </conflict>
    <text>Truncated C-terminus.</text>
</comment>
<reference key="1">
    <citation type="journal article" date="1998" name="Biochem. Biophys. Res. Commun.">
        <title>Cloning and characterization of BAP3 (BAI-associated protein 3), a C2 domain-containing protein that interacts with BAI1.</title>
        <authorList>
            <person name="Shiratsuchi T."/>
            <person name="Oda K."/>
            <person name="Nishimori H."/>
            <person name="Suzuki M."/>
            <person name="Takahashi E."/>
            <person name="Tokino T."/>
            <person name="Nakamura Y."/>
        </authorList>
    </citation>
    <scope>NUCLEOTIDE SEQUENCE [GENOMIC DNA]</scope>
    <scope>INTERACTION WITH ADGRB1</scope>
    <scope>TISSUE SPECIFICITY</scope>
    <scope>VARIANT ALA-582</scope>
</reference>
<reference key="2">
    <citation type="journal article" date="1998" name="DNA Res.">
        <title>Prediction of the coding sequences of unidentified human genes. XI. The complete sequences of 100 new cDNA clones from brain which code for large proteins in vitro.</title>
        <authorList>
            <person name="Nagase T."/>
            <person name="Ishikawa K."/>
            <person name="Suyama M."/>
            <person name="Kikuno R."/>
            <person name="Miyajima N."/>
            <person name="Tanaka A."/>
            <person name="Kotani H."/>
            <person name="Nomura N."/>
            <person name="Ohara O."/>
        </authorList>
    </citation>
    <scope>NUCLEOTIDE SEQUENCE [LARGE SCALE MRNA] (ISOFORM 1)</scope>
    <source>
        <tissue>Brain</tissue>
    </source>
</reference>
<reference key="3">
    <citation type="journal article" date="2002" name="DNA Res.">
        <title>Construction of expression-ready cDNA clones for KIAA genes: manual curation of 330 KIAA cDNA clones.</title>
        <authorList>
            <person name="Nakajima D."/>
            <person name="Okazaki N."/>
            <person name="Yamakawa H."/>
            <person name="Kikuno R."/>
            <person name="Ohara O."/>
            <person name="Nagase T."/>
        </authorList>
    </citation>
    <scope>SEQUENCE REVISION</scope>
</reference>
<reference key="4">
    <citation type="journal article" date="2004" name="Nat. Genet.">
        <title>Complete sequencing and characterization of 21,243 full-length human cDNAs.</title>
        <authorList>
            <person name="Ota T."/>
            <person name="Suzuki Y."/>
            <person name="Nishikawa T."/>
            <person name="Otsuki T."/>
            <person name="Sugiyama T."/>
            <person name="Irie R."/>
            <person name="Wakamatsu A."/>
            <person name="Hayashi K."/>
            <person name="Sato H."/>
            <person name="Nagai K."/>
            <person name="Kimura K."/>
            <person name="Makita H."/>
            <person name="Sekine M."/>
            <person name="Obayashi M."/>
            <person name="Nishi T."/>
            <person name="Shibahara T."/>
            <person name="Tanaka T."/>
            <person name="Ishii S."/>
            <person name="Yamamoto J."/>
            <person name="Saito K."/>
            <person name="Kawai Y."/>
            <person name="Isono Y."/>
            <person name="Nakamura Y."/>
            <person name="Nagahari K."/>
            <person name="Murakami K."/>
            <person name="Yasuda T."/>
            <person name="Iwayanagi T."/>
            <person name="Wagatsuma M."/>
            <person name="Shiratori A."/>
            <person name="Sudo H."/>
            <person name="Hosoiri T."/>
            <person name="Kaku Y."/>
            <person name="Kodaira H."/>
            <person name="Kondo H."/>
            <person name="Sugawara M."/>
            <person name="Takahashi M."/>
            <person name="Kanda K."/>
            <person name="Yokoi T."/>
            <person name="Furuya T."/>
            <person name="Kikkawa E."/>
            <person name="Omura Y."/>
            <person name="Abe K."/>
            <person name="Kamihara K."/>
            <person name="Katsuta N."/>
            <person name="Sato K."/>
            <person name="Tanikawa M."/>
            <person name="Yamazaki M."/>
            <person name="Ninomiya K."/>
            <person name="Ishibashi T."/>
            <person name="Yamashita H."/>
            <person name="Murakawa K."/>
            <person name="Fujimori K."/>
            <person name="Tanai H."/>
            <person name="Kimata M."/>
            <person name="Watanabe M."/>
            <person name="Hiraoka S."/>
            <person name="Chiba Y."/>
            <person name="Ishida S."/>
            <person name="Ono Y."/>
            <person name="Takiguchi S."/>
            <person name="Watanabe S."/>
            <person name="Yosida M."/>
            <person name="Hotuta T."/>
            <person name="Kusano J."/>
            <person name="Kanehori K."/>
            <person name="Takahashi-Fujii A."/>
            <person name="Hara H."/>
            <person name="Tanase T.-O."/>
            <person name="Nomura Y."/>
            <person name="Togiya S."/>
            <person name="Komai F."/>
            <person name="Hara R."/>
            <person name="Takeuchi K."/>
            <person name="Arita M."/>
            <person name="Imose N."/>
            <person name="Musashino K."/>
            <person name="Yuuki H."/>
            <person name="Oshima A."/>
            <person name="Sasaki N."/>
            <person name="Aotsuka S."/>
            <person name="Yoshikawa Y."/>
            <person name="Matsunawa H."/>
            <person name="Ichihara T."/>
            <person name="Shiohata N."/>
            <person name="Sano S."/>
            <person name="Moriya S."/>
            <person name="Momiyama H."/>
            <person name="Satoh N."/>
            <person name="Takami S."/>
            <person name="Terashima Y."/>
            <person name="Suzuki O."/>
            <person name="Nakagawa S."/>
            <person name="Senoh A."/>
            <person name="Mizoguchi H."/>
            <person name="Goto Y."/>
            <person name="Shimizu F."/>
            <person name="Wakebe H."/>
            <person name="Hishigaki H."/>
            <person name="Watanabe T."/>
            <person name="Sugiyama A."/>
            <person name="Takemoto M."/>
            <person name="Kawakami B."/>
            <person name="Yamazaki M."/>
            <person name="Watanabe K."/>
            <person name="Kumagai A."/>
            <person name="Itakura S."/>
            <person name="Fukuzumi Y."/>
            <person name="Fujimori Y."/>
            <person name="Komiyama M."/>
            <person name="Tashiro H."/>
            <person name="Tanigami A."/>
            <person name="Fujiwara T."/>
            <person name="Ono T."/>
            <person name="Yamada K."/>
            <person name="Fujii Y."/>
            <person name="Ozaki K."/>
            <person name="Hirao M."/>
            <person name="Ohmori Y."/>
            <person name="Kawabata A."/>
            <person name="Hikiji T."/>
            <person name="Kobatake N."/>
            <person name="Inagaki H."/>
            <person name="Ikema Y."/>
            <person name="Okamoto S."/>
            <person name="Okitani R."/>
            <person name="Kawakami T."/>
            <person name="Noguchi S."/>
            <person name="Itoh T."/>
            <person name="Shigeta K."/>
            <person name="Senba T."/>
            <person name="Matsumura K."/>
            <person name="Nakajima Y."/>
            <person name="Mizuno T."/>
            <person name="Morinaga M."/>
            <person name="Sasaki M."/>
            <person name="Togashi T."/>
            <person name="Oyama M."/>
            <person name="Hata H."/>
            <person name="Watanabe M."/>
            <person name="Komatsu T."/>
            <person name="Mizushima-Sugano J."/>
            <person name="Satoh T."/>
            <person name="Shirai Y."/>
            <person name="Takahashi Y."/>
            <person name="Nakagawa K."/>
            <person name="Okumura K."/>
            <person name="Nagase T."/>
            <person name="Nomura N."/>
            <person name="Kikuchi H."/>
            <person name="Masuho Y."/>
            <person name="Yamashita R."/>
            <person name="Nakai K."/>
            <person name="Yada T."/>
            <person name="Nakamura Y."/>
            <person name="Ohara O."/>
            <person name="Isogai T."/>
            <person name="Sugano S."/>
        </authorList>
    </citation>
    <scope>NUCLEOTIDE SEQUENCE [LARGE SCALE MRNA] (ISOFORMS 1; 3; 4; 5 AND 6)</scope>
    <scope>VARIANT ALA-582</scope>
    <source>
        <tissue>Brain</tissue>
        <tissue>Hippocampus</tissue>
    </source>
</reference>
<reference key="5">
    <citation type="journal article" date="2007" name="BMC Genomics">
        <title>The full-ORF clone resource of the German cDNA consortium.</title>
        <authorList>
            <person name="Bechtel S."/>
            <person name="Rosenfelder H."/>
            <person name="Duda A."/>
            <person name="Schmidt C.P."/>
            <person name="Ernst U."/>
            <person name="Wellenreuther R."/>
            <person name="Mehrle A."/>
            <person name="Schuster C."/>
            <person name="Bahr A."/>
            <person name="Bloecker H."/>
            <person name="Heubner D."/>
            <person name="Hoerlein A."/>
            <person name="Michel G."/>
            <person name="Wedler H."/>
            <person name="Koehrer K."/>
            <person name="Ottenwaelder B."/>
            <person name="Poustka A."/>
            <person name="Wiemann S."/>
            <person name="Schupp I."/>
        </authorList>
    </citation>
    <scope>NUCLEOTIDE SEQUENCE [LARGE SCALE MRNA] (ISOFORM 2)</scope>
    <scope>VARIANT ALA-582</scope>
    <source>
        <tissue>Amygdala</tissue>
    </source>
</reference>
<reference key="6">
    <citation type="journal article" date="2001" name="Hum. Mol. Genet.">
        <title>Sequence, structure and pathology of the fully annotated terminal 2 Mb of the short arm of human chromosome 16.</title>
        <authorList>
            <person name="Daniels R.J."/>
            <person name="Peden J.F."/>
            <person name="Lloyd C."/>
            <person name="Horsley S.W."/>
            <person name="Clark K."/>
            <person name="Tufarelli C."/>
            <person name="Kearney L."/>
            <person name="Buckle V.J."/>
            <person name="Doggett N.A."/>
            <person name="Flint J."/>
            <person name="Higgs D.R."/>
        </authorList>
    </citation>
    <scope>NUCLEOTIDE SEQUENCE [LARGE SCALE GENOMIC DNA]</scope>
</reference>
<reference key="7">
    <citation type="journal article" date="2004" name="Nature">
        <title>The sequence and analysis of duplication-rich human chromosome 16.</title>
        <authorList>
            <person name="Martin J."/>
            <person name="Han C."/>
            <person name="Gordon L.A."/>
            <person name="Terry A."/>
            <person name="Prabhakar S."/>
            <person name="She X."/>
            <person name="Xie G."/>
            <person name="Hellsten U."/>
            <person name="Chan Y.M."/>
            <person name="Altherr M."/>
            <person name="Couronne O."/>
            <person name="Aerts A."/>
            <person name="Bajorek E."/>
            <person name="Black S."/>
            <person name="Blumer H."/>
            <person name="Branscomb E."/>
            <person name="Brown N.C."/>
            <person name="Bruno W.J."/>
            <person name="Buckingham J.M."/>
            <person name="Callen D.F."/>
            <person name="Campbell C.S."/>
            <person name="Campbell M.L."/>
            <person name="Campbell E.W."/>
            <person name="Caoile C."/>
            <person name="Challacombe J.F."/>
            <person name="Chasteen L.A."/>
            <person name="Chertkov O."/>
            <person name="Chi H.C."/>
            <person name="Christensen M."/>
            <person name="Clark L.M."/>
            <person name="Cohn J.D."/>
            <person name="Denys M."/>
            <person name="Detter J.C."/>
            <person name="Dickson M."/>
            <person name="Dimitrijevic-Bussod M."/>
            <person name="Escobar J."/>
            <person name="Fawcett J.J."/>
            <person name="Flowers D."/>
            <person name="Fotopulos D."/>
            <person name="Glavina T."/>
            <person name="Gomez M."/>
            <person name="Gonzales E."/>
            <person name="Goodstein D."/>
            <person name="Goodwin L.A."/>
            <person name="Grady D.L."/>
            <person name="Grigoriev I."/>
            <person name="Groza M."/>
            <person name="Hammon N."/>
            <person name="Hawkins T."/>
            <person name="Haydu L."/>
            <person name="Hildebrand C.E."/>
            <person name="Huang W."/>
            <person name="Israni S."/>
            <person name="Jett J."/>
            <person name="Jewett P.B."/>
            <person name="Kadner K."/>
            <person name="Kimball H."/>
            <person name="Kobayashi A."/>
            <person name="Krawczyk M.-C."/>
            <person name="Leyba T."/>
            <person name="Longmire J.L."/>
            <person name="Lopez F."/>
            <person name="Lou Y."/>
            <person name="Lowry S."/>
            <person name="Ludeman T."/>
            <person name="Manohar C.F."/>
            <person name="Mark G.A."/>
            <person name="McMurray K.L."/>
            <person name="Meincke L.J."/>
            <person name="Morgan J."/>
            <person name="Moyzis R.K."/>
            <person name="Mundt M.O."/>
            <person name="Munk A.C."/>
            <person name="Nandkeshwar R.D."/>
            <person name="Pitluck S."/>
            <person name="Pollard M."/>
            <person name="Predki P."/>
            <person name="Parson-Quintana B."/>
            <person name="Ramirez L."/>
            <person name="Rash S."/>
            <person name="Retterer J."/>
            <person name="Ricke D.O."/>
            <person name="Robinson D.L."/>
            <person name="Rodriguez A."/>
            <person name="Salamov A."/>
            <person name="Saunders E.H."/>
            <person name="Scott D."/>
            <person name="Shough T."/>
            <person name="Stallings R.L."/>
            <person name="Stalvey M."/>
            <person name="Sutherland R.D."/>
            <person name="Tapia R."/>
            <person name="Tesmer J.G."/>
            <person name="Thayer N."/>
            <person name="Thompson L.S."/>
            <person name="Tice H."/>
            <person name="Torney D.C."/>
            <person name="Tran-Gyamfi M."/>
            <person name="Tsai M."/>
            <person name="Ulanovsky L.E."/>
            <person name="Ustaszewska A."/>
            <person name="Vo N."/>
            <person name="White P.S."/>
            <person name="Williams A.L."/>
            <person name="Wills P.L."/>
            <person name="Wu J.-R."/>
            <person name="Wu K."/>
            <person name="Yang J."/>
            <person name="DeJong P."/>
            <person name="Bruce D."/>
            <person name="Doggett N.A."/>
            <person name="Deaven L."/>
            <person name="Schmutz J."/>
            <person name="Grimwood J."/>
            <person name="Richardson P."/>
            <person name="Rokhsar D.S."/>
            <person name="Eichler E.E."/>
            <person name="Gilna P."/>
            <person name="Lucas S.M."/>
            <person name="Myers R.M."/>
            <person name="Rubin E.M."/>
            <person name="Pennacchio L.A."/>
        </authorList>
    </citation>
    <scope>NUCLEOTIDE SEQUENCE [LARGE SCALE GENOMIC DNA]</scope>
</reference>
<reference key="8">
    <citation type="submission" date="2005-09" db="EMBL/GenBank/DDBJ databases">
        <authorList>
            <person name="Mural R.J."/>
            <person name="Istrail S."/>
            <person name="Sutton G.G."/>
            <person name="Florea L."/>
            <person name="Halpern A.L."/>
            <person name="Mobarry C.M."/>
            <person name="Lippert R."/>
            <person name="Walenz B."/>
            <person name="Shatkay H."/>
            <person name="Dew I."/>
            <person name="Miller J.R."/>
            <person name="Flanigan M.J."/>
            <person name="Edwards N.J."/>
            <person name="Bolanos R."/>
            <person name="Fasulo D."/>
            <person name="Halldorsson B.V."/>
            <person name="Hannenhalli S."/>
            <person name="Turner R."/>
            <person name="Yooseph S."/>
            <person name="Lu F."/>
            <person name="Nusskern D.R."/>
            <person name="Shue B.C."/>
            <person name="Zheng X.H."/>
            <person name="Zhong F."/>
            <person name="Delcher A.L."/>
            <person name="Huson D.H."/>
            <person name="Kravitz S.A."/>
            <person name="Mouchard L."/>
            <person name="Reinert K."/>
            <person name="Remington K.A."/>
            <person name="Clark A.G."/>
            <person name="Waterman M.S."/>
            <person name="Eichler E.E."/>
            <person name="Adams M.D."/>
            <person name="Hunkapiller M.W."/>
            <person name="Myers E.W."/>
            <person name="Venter J.C."/>
        </authorList>
    </citation>
    <scope>NUCLEOTIDE SEQUENCE [LARGE SCALE GENOMIC DNA]</scope>
</reference>
<reference key="9">
    <citation type="journal article" date="2004" name="Genome Res.">
        <title>The status, quality, and expansion of the NIH full-length cDNA project: the Mammalian Gene Collection (MGC).</title>
        <authorList>
            <consortium name="The MGC Project Team"/>
        </authorList>
    </citation>
    <scope>NUCLEOTIDE SEQUENCE [LARGE SCALE MRNA] (ISOFORM 1)</scope>
    <scope>VARIANT ALA-582</scope>
    <source>
        <tissue>Brain</tissue>
    </source>
</reference>
<reference key="10">
    <citation type="journal article" date="2002" name="Cancer Cell">
        <title>Induction of BAIAP3 by the EWS-WT1 chimeric fusion implicates regulated exocytosis in tumorigenesis.</title>
        <authorList>
            <person name="Palmer R.E."/>
            <person name="Lee S.B."/>
            <person name="Wong J.C."/>
            <person name="Reynolds P.A."/>
            <person name="Zhang H."/>
            <person name="Truong V."/>
            <person name="Oliner J.D."/>
            <person name="Gerald W.L."/>
            <person name="Haber D.A."/>
        </authorList>
    </citation>
    <scope>TISSUE SPECIFICITY</scope>
</reference>
<reference key="11">
    <citation type="journal article" date="2014" name="J. Proteomics">
        <title>An enzyme assisted RP-RPLC approach for in-depth analysis of human liver phosphoproteome.</title>
        <authorList>
            <person name="Bian Y."/>
            <person name="Song C."/>
            <person name="Cheng K."/>
            <person name="Dong M."/>
            <person name="Wang F."/>
            <person name="Huang J."/>
            <person name="Sun D."/>
            <person name="Wang L."/>
            <person name="Ye M."/>
            <person name="Zou H."/>
        </authorList>
    </citation>
    <scope>IDENTIFICATION BY MASS SPECTROMETRY [LARGE SCALE ANALYSIS]</scope>
    <source>
        <tissue>Liver</tissue>
    </source>
</reference>
<reference key="12">
    <citation type="journal article" date="2017" name="J. Cell Biol.">
        <title>BAIAP3, a C2 domain-containing Munc13 protein, controls the fate of dense-core vesicles in neuroendocrine cells.</title>
        <authorList>
            <person name="Zhang X."/>
            <person name="Jiang S."/>
            <person name="Mitok K.A."/>
            <person name="Li L."/>
            <person name="Attie A.D."/>
            <person name="Martin T.F.J."/>
        </authorList>
    </citation>
    <scope>FUNCTION</scope>
    <scope>INTERACTION WITH VAMP3; VAMP4; STX6 AND STX16</scope>
    <scope>SUBCELLULAR LOCATION</scope>
    <scope>TOPOLOGY</scope>
</reference>
<dbReference type="EMBL" id="AB017111">
    <property type="protein sequence ID" value="BAA34710.1"/>
    <property type="molecule type" value="Genomic_DNA"/>
</dbReference>
<dbReference type="EMBL" id="AB018277">
    <property type="protein sequence ID" value="BAA34454.2"/>
    <property type="status" value="ALT_INIT"/>
    <property type="molecule type" value="mRNA"/>
</dbReference>
<dbReference type="EMBL" id="AK294744">
    <property type="protein sequence ID" value="BAG57886.1"/>
    <property type="status" value="ALT_SEQ"/>
    <property type="molecule type" value="mRNA"/>
</dbReference>
<dbReference type="EMBL" id="AK295645">
    <property type="protein sequence ID" value="BAG58515.1"/>
    <property type="molecule type" value="mRNA"/>
</dbReference>
<dbReference type="EMBL" id="AK299309">
    <property type="protein sequence ID" value="BAG61321.1"/>
    <property type="molecule type" value="mRNA"/>
</dbReference>
<dbReference type="EMBL" id="AK299358">
    <property type="protein sequence ID" value="BAG61353.1"/>
    <property type="molecule type" value="mRNA"/>
</dbReference>
<dbReference type="EMBL" id="AK315059">
    <property type="protein sequence ID" value="BAG37534.1"/>
    <property type="molecule type" value="mRNA"/>
</dbReference>
<dbReference type="EMBL" id="AL834321">
    <property type="protein sequence ID" value="CAH56376.1"/>
    <property type="molecule type" value="mRNA"/>
</dbReference>
<dbReference type="EMBL" id="AE006467">
    <property type="protein sequence ID" value="AAK61275.1"/>
    <property type="molecule type" value="Genomic_DNA"/>
</dbReference>
<dbReference type="EMBL" id="AL031709">
    <property type="status" value="NOT_ANNOTATED_CDS"/>
    <property type="molecule type" value="Genomic_DNA"/>
</dbReference>
<dbReference type="EMBL" id="CH471112">
    <property type="protein sequence ID" value="EAW85670.1"/>
    <property type="molecule type" value="Genomic_DNA"/>
</dbReference>
<dbReference type="EMBL" id="BC104966">
    <property type="protein sequence ID" value="AAI04967.1"/>
    <property type="molecule type" value="mRNA"/>
</dbReference>
<dbReference type="EMBL" id="BC112129">
    <property type="protein sequence ID" value="AAI12130.1"/>
    <property type="molecule type" value="mRNA"/>
</dbReference>
<dbReference type="CCDS" id="CCDS10434.1">
    <molecule id="O94812-1"/>
</dbReference>
<dbReference type="CCDS" id="CCDS55978.1">
    <molecule id="O94812-6"/>
</dbReference>
<dbReference type="CCDS" id="CCDS55979.1">
    <molecule id="O94812-7"/>
</dbReference>
<dbReference type="CCDS" id="CCDS58402.1">
    <molecule id="O94812-3"/>
</dbReference>
<dbReference type="CCDS" id="CCDS58403.1">
    <molecule id="O94812-5"/>
</dbReference>
<dbReference type="CCDS" id="CCDS66894.1">
    <molecule id="O94812-2"/>
</dbReference>
<dbReference type="PIR" id="JE0347">
    <property type="entry name" value="JE0347"/>
</dbReference>
<dbReference type="RefSeq" id="NP_001186025.1">
    <molecule id="O94812-7"/>
    <property type="nucleotide sequence ID" value="NM_001199096.2"/>
</dbReference>
<dbReference type="RefSeq" id="NP_001186026.1">
    <molecule id="O94812-6"/>
    <property type="nucleotide sequence ID" value="NM_001199097.2"/>
</dbReference>
<dbReference type="RefSeq" id="NP_001186027.1">
    <molecule id="O94812-3"/>
    <property type="nucleotide sequence ID" value="NM_001199098.2"/>
</dbReference>
<dbReference type="RefSeq" id="NP_001186028.1">
    <molecule id="O94812-5"/>
    <property type="nucleotide sequence ID" value="NM_001199099.2"/>
</dbReference>
<dbReference type="RefSeq" id="NP_001273393.2">
    <molecule id="O94812-2"/>
    <property type="nucleotide sequence ID" value="NM_001286464.2"/>
</dbReference>
<dbReference type="RefSeq" id="NP_003924.2">
    <molecule id="O94812-1"/>
    <property type="nucleotide sequence ID" value="NM_003933.4"/>
</dbReference>
<dbReference type="SMR" id="O94812"/>
<dbReference type="BioGRID" id="114450">
    <property type="interactions" value="5"/>
</dbReference>
<dbReference type="FunCoup" id="O94812">
    <property type="interactions" value="452"/>
</dbReference>
<dbReference type="IntAct" id="O94812">
    <property type="interactions" value="3"/>
</dbReference>
<dbReference type="MINT" id="O94812"/>
<dbReference type="STRING" id="9606.ENSP00000324510"/>
<dbReference type="GlyGen" id="O94812">
    <property type="glycosylation" value="3 sites, 1 O-linked glycan (2 sites)"/>
</dbReference>
<dbReference type="iPTMnet" id="O94812"/>
<dbReference type="PhosphoSitePlus" id="O94812"/>
<dbReference type="BioMuta" id="BAIAP3"/>
<dbReference type="MassIVE" id="O94812"/>
<dbReference type="PaxDb" id="9606-ENSP00000324510"/>
<dbReference type="PeptideAtlas" id="O94812"/>
<dbReference type="ProteomicsDB" id="18396"/>
<dbReference type="ProteomicsDB" id="188"/>
<dbReference type="ProteomicsDB" id="42936"/>
<dbReference type="ProteomicsDB" id="43226"/>
<dbReference type="ProteomicsDB" id="45064"/>
<dbReference type="ProteomicsDB" id="50452">
    <molecule id="O94812-1"/>
</dbReference>
<dbReference type="ProteomicsDB" id="50453">
    <molecule id="O94812-2"/>
</dbReference>
<dbReference type="Antibodypedia" id="23051">
    <property type="antibodies" value="139 antibodies from 26 providers"/>
</dbReference>
<dbReference type="DNASU" id="8938"/>
<dbReference type="Ensembl" id="ENST00000324385.9">
    <molecule id="O94812-1"/>
    <property type="protein sequence ID" value="ENSP00000324510.5"/>
    <property type="gene ID" value="ENSG00000007516.15"/>
</dbReference>
<dbReference type="Ensembl" id="ENST00000397488.6">
    <molecule id="O94812-2"/>
    <property type="protein sequence ID" value="ENSP00000380625.2"/>
    <property type="gene ID" value="ENSG00000007516.15"/>
</dbReference>
<dbReference type="Ensembl" id="ENST00000421665.6">
    <molecule id="O94812-7"/>
    <property type="protein sequence ID" value="ENSP00000409533.2"/>
    <property type="gene ID" value="ENSG00000007516.15"/>
</dbReference>
<dbReference type="Ensembl" id="ENST00000426824.8">
    <molecule id="O94812-6"/>
    <property type="protein sequence ID" value="ENSP00000407242.4"/>
    <property type="gene ID" value="ENSG00000007516.15"/>
</dbReference>
<dbReference type="Ensembl" id="ENST00000562208.5">
    <molecule id="O94812-3"/>
    <property type="protein sequence ID" value="ENSP00000458134.1"/>
    <property type="gene ID" value="ENSG00000007516.15"/>
</dbReference>
<dbReference type="Ensembl" id="ENST00000568887.5">
    <molecule id="O94812-5"/>
    <property type="protein sequence ID" value="ENSP00000457644.1"/>
    <property type="gene ID" value="ENSG00000007516.15"/>
</dbReference>
<dbReference type="GeneID" id="8938"/>
<dbReference type="KEGG" id="hsa:8938"/>
<dbReference type="MANE-Select" id="ENST00000426824.8">
    <molecule id="O94812-6"/>
    <property type="protein sequence ID" value="ENSP00000407242.4"/>
    <property type="RefSeq nucleotide sequence ID" value="NM_001199097.2"/>
    <property type="RefSeq protein sequence ID" value="NP_001186026.1"/>
</dbReference>
<dbReference type="UCSC" id="uc002clj.4">
    <molecule id="O94812-1"/>
    <property type="organism name" value="human"/>
</dbReference>
<dbReference type="AGR" id="HGNC:948"/>
<dbReference type="CTD" id="8938"/>
<dbReference type="DisGeNET" id="8938"/>
<dbReference type="GeneCards" id="BAIAP3"/>
<dbReference type="HGNC" id="HGNC:948">
    <property type="gene designation" value="BAIAP3"/>
</dbReference>
<dbReference type="HPA" id="ENSG00000007516">
    <property type="expression patterns" value="Group enriched (brain, pituitary gland)"/>
</dbReference>
<dbReference type="MalaCards" id="BAIAP3"/>
<dbReference type="MIM" id="604009">
    <property type="type" value="gene"/>
</dbReference>
<dbReference type="neXtProt" id="NX_O94812"/>
<dbReference type="OpenTargets" id="ENSG00000007516"/>
<dbReference type="PharmGKB" id="PA25252"/>
<dbReference type="VEuPathDB" id="HostDB:ENSG00000007516"/>
<dbReference type="eggNOG" id="KOG1328">
    <property type="taxonomic scope" value="Eukaryota"/>
</dbReference>
<dbReference type="GeneTree" id="ENSGT00730000110939"/>
<dbReference type="HOGENOM" id="CLU_003295_2_0_1"/>
<dbReference type="InParanoid" id="O94812"/>
<dbReference type="OMA" id="WLAEAMN"/>
<dbReference type="OrthoDB" id="7976202at2759"/>
<dbReference type="PAN-GO" id="O94812">
    <property type="GO annotations" value="8 GO annotations based on evolutionary models"/>
</dbReference>
<dbReference type="PhylomeDB" id="O94812"/>
<dbReference type="TreeFam" id="TF315526"/>
<dbReference type="PathwayCommons" id="O94812"/>
<dbReference type="SignaLink" id="O94812"/>
<dbReference type="BioGRID-ORCS" id="8938">
    <property type="hits" value="11 hits in 1146 CRISPR screens"/>
</dbReference>
<dbReference type="GeneWiki" id="BAIAP3"/>
<dbReference type="GenomeRNAi" id="8938"/>
<dbReference type="Pharos" id="O94812">
    <property type="development level" value="Tbio"/>
</dbReference>
<dbReference type="PRO" id="PR:O94812"/>
<dbReference type="Proteomes" id="UP000005640">
    <property type="component" value="Chromosome 16"/>
</dbReference>
<dbReference type="RNAct" id="O94812">
    <property type="molecule type" value="protein"/>
</dbReference>
<dbReference type="Bgee" id="ENSG00000007516">
    <property type="expression patterns" value="Expressed in right uterine tube and 135 other cell types or tissues"/>
</dbReference>
<dbReference type="ExpressionAtlas" id="O94812">
    <property type="expression patterns" value="baseline and differential"/>
</dbReference>
<dbReference type="GO" id="GO:0005829">
    <property type="term" value="C:cytosol"/>
    <property type="evidence" value="ECO:0000314"/>
    <property type="project" value="UniProtKB"/>
</dbReference>
<dbReference type="GO" id="GO:0098982">
    <property type="term" value="C:GABA-ergic synapse"/>
    <property type="evidence" value="ECO:0007669"/>
    <property type="project" value="Ensembl"/>
</dbReference>
<dbReference type="GO" id="GO:0031902">
    <property type="term" value="C:late endosome membrane"/>
    <property type="evidence" value="ECO:0000314"/>
    <property type="project" value="UniProtKB"/>
</dbReference>
<dbReference type="GO" id="GO:0005886">
    <property type="term" value="C:plasma membrane"/>
    <property type="evidence" value="ECO:0000314"/>
    <property type="project" value="UniProtKB"/>
</dbReference>
<dbReference type="GO" id="GO:0098793">
    <property type="term" value="C:presynapse"/>
    <property type="evidence" value="ECO:0007669"/>
    <property type="project" value="GOC"/>
</dbReference>
<dbReference type="GO" id="GO:0055038">
    <property type="term" value="C:recycling endosome membrane"/>
    <property type="evidence" value="ECO:0000314"/>
    <property type="project" value="UniProtKB"/>
</dbReference>
<dbReference type="GO" id="GO:0099503">
    <property type="term" value="C:secretory vesicle"/>
    <property type="evidence" value="ECO:0000318"/>
    <property type="project" value="GO_Central"/>
</dbReference>
<dbReference type="GO" id="GO:0032588">
    <property type="term" value="C:trans-Golgi network membrane"/>
    <property type="evidence" value="ECO:0000314"/>
    <property type="project" value="UniProtKB"/>
</dbReference>
<dbReference type="GO" id="GO:0005509">
    <property type="term" value="F:calcium ion binding"/>
    <property type="evidence" value="ECO:0000314"/>
    <property type="project" value="UniProtKB"/>
</dbReference>
<dbReference type="GO" id="GO:0005543">
    <property type="term" value="F:phospholipid binding"/>
    <property type="evidence" value="ECO:0000314"/>
    <property type="project" value="UniProtKB"/>
</dbReference>
<dbReference type="GO" id="GO:0000149">
    <property type="term" value="F:SNARE binding"/>
    <property type="evidence" value="ECO:0000314"/>
    <property type="project" value="UniProtKB"/>
</dbReference>
<dbReference type="GO" id="GO:0019905">
    <property type="term" value="F:syntaxin binding"/>
    <property type="evidence" value="ECO:0000353"/>
    <property type="project" value="UniProtKB"/>
</dbReference>
<dbReference type="GO" id="GO:1990502">
    <property type="term" value="P:dense core granule maturation"/>
    <property type="evidence" value="ECO:0000315"/>
    <property type="project" value="UniProtKB"/>
</dbReference>
<dbReference type="GO" id="GO:0006887">
    <property type="term" value="P:exocytosis"/>
    <property type="evidence" value="ECO:0007669"/>
    <property type="project" value="UniProtKB-KW"/>
</dbReference>
<dbReference type="GO" id="GO:0007186">
    <property type="term" value="P:G protein-coupled receptor signaling pathway"/>
    <property type="evidence" value="ECO:0000353"/>
    <property type="project" value="MGI"/>
</dbReference>
<dbReference type="GO" id="GO:0035774">
    <property type="term" value="P:positive regulation of insulin secretion involved in cellular response to glucose stimulus"/>
    <property type="evidence" value="ECO:0000315"/>
    <property type="project" value="UniProtKB"/>
</dbReference>
<dbReference type="GO" id="GO:0001956">
    <property type="term" value="P:positive regulation of neurotransmitter secretion"/>
    <property type="evidence" value="ECO:0000315"/>
    <property type="project" value="UniProtKB"/>
</dbReference>
<dbReference type="GO" id="GO:0050795">
    <property type="term" value="P:regulation of behavior"/>
    <property type="evidence" value="ECO:0007669"/>
    <property type="project" value="Ensembl"/>
</dbReference>
<dbReference type="GO" id="GO:1905413">
    <property type="term" value="P:regulation of dense core granule exocytosis"/>
    <property type="evidence" value="ECO:0000314"/>
    <property type="project" value="UniProtKB"/>
</dbReference>
<dbReference type="GO" id="GO:0032228">
    <property type="term" value="P:regulation of synaptic transmission, GABAergic"/>
    <property type="evidence" value="ECO:0000250"/>
    <property type="project" value="UniProtKB"/>
</dbReference>
<dbReference type="GO" id="GO:0042147">
    <property type="term" value="P:retrograde transport, endosome to Golgi"/>
    <property type="evidence" value="ECO:0000314"/>
    <property type="project" value="UniProtKB"/>
</dbReference>
<dbReference type="CDD" id="cd08676">
    <property type="entry name" value="C2A_Munc13-like"/>
    <property type="match status" value="1"/>
</dbReference>
<dbReference type="CDD" id="cd04009">
    <property type="entry name" value="C2B_Munc13-like"/>
    <property type="match status" value="1"/>
</dbReference>
<dbReference type="FunFam" id="1.10.357.50:FF:000007">
    <property type="entry name" value="BAI1 associated protein 3"/>
    <property type="match status" value="1"/>
</dbReference>
<dbReference type="FunFam" id="2.60.40.150:FF:000109">
    <property type="entry name" value="BAI1-associated protein 3 isoform X1"/>
    <property type="match status" value="1"/>
</dbReference>
<dbReference type="FunFam" id="2.60.40.150:FF:000134">
    <property type="entry name" value="BAI1-associated protein 3 isoform X1"/>
    <property type="match status" value="1"/>
</dbReference>
<dbReference type="Gene3D" id="1.10.357.50">
    <property type="match status" value="1"/>
</dbReference>
<dbReference type="Gene3D" id="2.60.40.150">
    <property type="entry name" value="C2 domain"/>
    <property type="match status" value="2"/>
</dbReference>
<dbReference type="InterPro" id="IPR000008">
    <property type="entry name" value="C2_dom"/>
</dbReference>
<dbReference type="InterPro" id="IPR035892">
    <property type="entry name" value="C2_domain_sf"/>
</dbReference>
<dbReference type="InterPro" id="IPR010439">
    <property type="entry name" value="MUN_dom"/>
</dbReference>
<dbReference type="InterPro" id="IPR014770">
    <property type="entry name" value="Munc13_1"/>
</dbReference>
<dbReference type="InterPro" id="IPR014772">
    <property type="entry name" value="Munc13_dom-2"/>
</dbReference>
<dbReference type="InterPro" id="IPR052095">
    <property type="entry name" value="UNC-13_domain"/>
</dbReference>
<dbReference type="PANTHER" id="PTHR45999:SF1">
    <property type="entry name" value="BAI1-ASSOCIATED PROTEIN 3"/>
    <property type="match status" value="1"/>
</dbReference>
<dbReference type="PANTHER" id="PTHR45999">
    <property type="entry name" value="UNC-13-4A, ISOFORM B"/>
    <property type="match status" value="1"/>
</dbReference>
<dbReference type="Pfam" id="PF00168">
    <property type="entry name" value="C2"/>
    <property type="match status" value="3"/>
</dbReference>
<dbReference type="Pfam" id="PF06292">
    <property type="entry name" value="MUN"/>
    <property type="match status" value="1"/>
</dbReference>
<dbReference type="SMART" id="SM00239">
    <property type="entry name" value="C2"/>
    <property type="match status" value="2"/>
</dbReference>
<dbReference type="SUPFAM" id="SSF49562">
    <property type="entry name" value="C2 domain (Calcium/lipid-binding domain, CaLB)"/>
    <property type="match status" value="2"/>
</dbReference>
<dbReference type="PROSITE" id="PS50004">
    <property type="entry name" value="C2"/>
    <property type="match status" value="2"/>
</dbReference>
<dbReference type="PROSITE" id="PS51258">
    <property type="entry name" value="MHD1"/>
    <property type="match status" value="1"/>
</dbReference>
<dbReference type="PROSITE" id="PS51259">
    <property type="entry name" value="MHD2"/>
    <property type="match status" value="1"/>
</dbReference>